<accession>P45442</accession>
<gene>
    <name evidence="22" type="primary">lag-2</name>
    <name evidence="22" type="synonym">let-461</name>
    <name evidence="22" type="ORF">Y73C8B.4</name>
</gene>
<comment type="function">
    <text evidence="5 6 7 8 9 11 12 13 14 15 16">Probable ligand for lin-12/Notch and glp-1/Notch receptors and involved in the mediation of Notch signaling (PubMed:18036582, PubMed:18700817, PubMed:7607081, PubMed:8139658, PubMed:8575327). Involved in the lin-12/Notch pathway signaling of cell fate in vulval precursor cells (VPCs) and in the postembryonic mesodermal lineage (M lineage), acting redundantly with dsl-1 and apx-1 (PubMed:14960273, PubMed:18036582). Functions in uterine cells to promote basement membrane mobility during tissue remodeling (PubMed:27661254, PubMed:8139658). Required for oocyte growth control, acting redundantly with apx-1, perhaps signaling via the glp-1/Notch pathway (PubMed:19502484). Plays a role in Notch-dependent induction of left-right asymmetry in interneurons and motoneurons (PubMed:21737278). Involved in maintaining the developmentally arrested larval state known as dauer, probably signaling in the glp-1/Notch pathway (PubMed:18599512). Required for normal sleep bout quantity and arousal thresholds during the transition from the last larval stage to adulthood in well-fed animals (PubMed:29523076).</text>
</comment>
<comment type="subunit">
    <text evidence="8">May interact with lin-12 / Notch receptor.</text>
</comment>
<comment type="subcellular location">
    <subcellularLocation>
        <location evidence="20 21">Cell membrane</location>
        <topology evidence="2">Single-pass type I membrane protein</topology>
    </subcellularLocation>
</comment>
<comment type="tissue specificity">
    <text evidence="14">Expressed in the gonad distal tip cell (DTC) of hermaphrodites.</text>
</comment>
<comment type="developmental stage">
    <text evidence="5 6 7 10">Expressed in cells immediately adjacent to ventral mesodermal lineage (M lineage) cells, but not next to dorsal M lineage cells, beginning at the 4-M stage (PubMed:18036582). Expressed in all six vulval precursor cells (VPCs) in the early larval L3 stage, subsequently more highly expressed in P6.p while the expression in the other VPCs diminishes (PubMed:14960273, PubMed:21596897). Expressed in the anchor cell (AC) and distal tip cells (DTCs) of the somatic gonad at larval stage L3 (PubMed:21596897). Expressed in the inter labial IL2 neurons at the onset of and throughout the developmentally arrested larval state known as dauer (PubMed:18599512).</text>
</comment>
<comment type="domain">
    <text evidence="18 19">The N-terminal region and DSL domain may be involved in interacting with Notch receptors.</text>
</comment>
<comment type="disruption phenotype">
    <text evidence="5 6 9 12">RNAi-mediated knockdown in cells of the pi uterine cell lineage results in impaired basement membrane mobility (PubMed:27661254). RNAi-mediated knockdown, on a lin-15 mutant background, causes adjacent vulval precursor cells (VPCs) to adopt altered cell fate (PubMed:14960273). RNAi-mediated knockdown, when combined with knockdown of apx-1, on a dsl-1 mutant background, causes adjacent vulval precursor cells (VPCs) to adopt altered cell fate; phenotype exacerbated on double mutant lin-15;dsl-1 background (PubMed:14960273). RNAi-mediated knockdown, on a lin-12 mutant background, induces the presence of 1-2 extra mesodermal lineage (M lineage)-derived coelomocytes and the concomitant loss of sex myoblasts on the ventral side of the animal (PubMed:18036582). On an apx-1 mutant background, RNAi-mediated knockdown causes germ cells to display nuclear morphology consistent with meiotic prophase or gametogenesis in adult hermaphrodites (PubMed:19502484).</text>
</comment>
<proteinExistence type="evidence at protein level"/>
<name>LAG2_CAEEL</name>
<protein>
    <recommendedName>
        <fullName>Protein lag-2</fullName>
    </recommendedName>
    <alternativeName>
        <fullName>Lethal protein 461</fullName>
    </alternativeName>
</protein>
<reference key="1">
    <citation type="journal article" date="1994" name="Nature">
        <title>Sequence of C. elegans lag-2 reveals a cell-signalling domain shared with Delta and Serrate of Drosophila.</title>
        <authorList>
            <person name="Tax F.E."/>
            <person name="Yeargers J.J."/>
            <person name="Thomas J.H."/>
        </authorList>
    </citation>
    <scope>NUCLEOTIDE SEQUENCE [GENOMIC DNA]</scope>
    <scope>FUNCTION</scope>
    <scope>MUTAGENESIS OF GLY-262</scope>
    <source>
        <strain>Bristol N2</strain>
    </source>
</reference>
<reference key="2">
    <citation type="journal article" date="1998" name="Science">
        <title>Genome sequence of the nematode C. elegans: a platform for investigating biology.</title>
        <authorList>
            <consortium name="The C. elegans sequencing consortium"/>
        </authorList>
    </citation>
    <scope>NUCLEOTIDE SEQUENCE [LARGE SCALE GENOMIC DNA]</scope>
    <source>
        <strain>Bristol N2</strain>
    </source>
</reference>
<reference key="3">
    <citation type="journal article" date="1994" name="Development">
        <title>lag-2 may encode a signaling ligand for the GLP-1 and LIN-12 receptors of C. elegans.</title>
        <authorList>
            <person name="Henderson S.T."/>
            <person name="Gao D."/>
            <person name="Lambie E.J."/>
            <person name="Kimble J."/>
        </authorList>
    </citation>
    <scope>FUNCTION</scope>
    <scope>TISSUE SPECIFICITY</scope>
    <scope>MUTAGENESIS OF 79-GLN--VAL-402</scope>
</reference>
<reference key="4">
    <citation type="journal article" date="1995" name="Development">
        <title>Interchangeability of Caenorhabditis elegans DSL proteins and intrinsic signalling activity of their extracellular domains in vivo.</title>
        <authorList>
            <person name="Fitzgerald K."/>
            <person name="Greenwald I."/>
        </authorList>
    </citation>
    <scope>FUNCTION</scope>
    <scope>MUTAGENESIS OF 281-VAL--VAL-402</scope>
</reference>
<reference key="5">
    <citation type="journal article" date="1997" name="Mol. Biol. Cell">
        <title>Functional domains of LAG-2, a putative signaling ligand for LIN-12 and GLP-1 receptors in Caenorhabditis elegans.</title>
        <authorList>
            <person name="Henderson S.T."/>
            <person name="Gao D."/>
            <person name="Christensen S."/>
            <person name="Kimble J."/>
        </authorList>
    </citation>
    <scope>DOMAIN</scope>
    <scope>MUTAGENESIS OF 287-SER--VAL-402 AND 308-LYS--VAL-402</scope>
</reference>
<reference key="6">
    <citation type="journal article" date="2004" name="Dev. Cell">
        <title>The lateral signal for LIN-12/Notch in C. elegans vulval development comprises redundant secreted and transmembrane DSL proteins.</title>
        <authorList>
            <person name="Chen N."/>
            <person name="Greenwald I."/>
        </authorList>
    </citation>
    <scope>FUNCTION</scope>
    <scope>DEVELOPMENTAL STAGE</scope>
    <scope>DISRUPTION PHENOTYPE</scope>
</reference>
<reference key="7">
    <citation type="journal article" date="2008" name="Development">
        <title>Notch signalling is required for both dauer maintenance and recovery in C. elegans.</title>
        <authorList>
            <person name="Ouellet J."/>
            <person name="Li S."/>
            <person name="Roy R."/>
        </authorList>
    </citation>
    <scope>FUNCTION</scope>
    <scope>DEVELOPMENTAL STAGE</scope>
</reference>
<reference key="8">
    <citation type="journal article" date="2008" name="Dev. Biol.">
        <title>Dorsoventral patterning of the C. elegans postembryonic mesoderm requires both LIN-12/Notch and TGFbeta signaling.</title>
        <authorList>
            <person name="Foehr M.L."/>
            <person name="Liu J."/>
        </authorList>
    </citation>
    <scope>FUNCTION</scope>
    <scope>DEVELOPMENTAL STAGE</scope>
    <scope>DISRUPTION PHENOTYPE</scope>
</reference>
<reference key="9">
    <citation type="journal article" date="2008" name="PLoS Biol.">
        <title>OSM-11 facilitates LIN-12 Notch signaling during Caenorhabditis elegans vulval development.</title>
        <authorList>
            <person name="Komatsu H."/>
            <person name="Chao M.Y."/>
            <person name="Larkins-Ford J."/>
            <person name="Corkins M.E."/>
            <person name="Somers G.A."/>
            <person name="Tucey T."/>
            <person name="Dionne H.M."/>
            <person name="White J.Q."/>
            <person name="Wani K."/>
            <person name="Boxem M."/>
            <person name="Hart A.C."/>
        </authorList>
    </citation>
    <scope>FUNCTION</scope>
    <scope>INTERACTION WITH LIN-12</scope>
</reference>
<reference key="10">
    <citation type="journal article" date="2009" name="Development">
        <title>MSP and GLP-1/Notch signaling coordinately regulate actomyosin-dependent cytoplasmic streaming and oocyte growth in C. elegans.</title>
        <authorList>
            <person name="Nadarajan S."/>
            <person name="Govindan J.A."/>
            <person name="McGovern M."/>
            <person name="Hubbard E.J."/>
            <person name="Greenstein D."/>
        </authorList>
    </citation>
    <scope>FUNCTION</scope>
    <scope>DISRUPTION PHENOTYPE</scope>
</reference>
<reference key="11">
    <citation type="journal article" date="2011" name="Curr. Biol.">
        <title>Notch-dependent induction of left/right asymmetry in C. elegans interneurons and motoneurons.</title>
        <authorList>
            <person name="Bertrand V."/>
            <person name="Bisso P."/>
            <person name="Poole R.J."/>
            <person name="Hobert O."/>
        </authorList>
    </citation>
    <scope>FUNCTION</scope>
    <scope>DEVELOPMENTAL STAGE</scope>
</reference>
<reference key="12">
    <citation type="journal article" date="2011" name="Genetics">
        <title>Spatial regulation of lag-2 transcription during vulval precursor cell fate patterning in Caenorhabditis elegans.</title>
        <authorList>
            <person name="Zhang X."/>
            <person name="Greenwald I."/>
        </authorList>
    </citation>
    <scope>DEVELOPMENTAL STAGE</scope>
</reference>
<reference key="13">
    <citation type="journal article" date="2016" name="Elife">
        <title>Boundary cells restrict dystroglycan trafficking to control basement membrane sliding during tissue remodeling.</title>
        <authorList>
            <person name="McClatchey S.T."/>
            <person name="Wang Z."/>
            <person name="Linden L.M."/>
            <person name="Hastie E.L."/>
            <person name="Wang L."/>
            <person name="Shen W."/>
            <person name="Chen A."/>
            <person name="Chi Q."/>
            <person name="Sherwood D.R."/>
        </authorList>
    </citation>
    <scope>FUNCTION</scope>
    <scope>DISRUPTION PHENOTYPE</scope>
</reference>
<reference key="14">
    <citation type="journal article" date="2018" name="BMC Neurosci.">
        <title>Normal sleep bouts are not essential for C. elegans survival and FoxO is important for compensatory changes in sleep.</title>
        <authorList>
            <person name="Bennett H.L."/>
            <person name="Khoruzhik Y."/>
            <person name="Hayden D."/>
            <person name="Huang H."/>
            <person name="Sanders J."/>
            <person name="Walsh M.B."/>
            <person name="Biron D."/>
            <person name="Hart A.C."/>
        </authorList>
    </citation>
    <scope>FUNCTION</scope>
</reference>
<sequence>MIAYFLLLLTCLPVLQARVEVHQEFISSKRVSVRFEIVTESHSPNRPVTFDLFPRGPKTNIILLDTFNPVFNFSIQLVQPFTGQPLGDRIYRKVQFSGTNQPWINDTFTTTSGISLSVATEVTCARNYFGNRCENFCDAHLAKAARKRCDAMGRLRCDIGWMGPHCGQAVDPRKCSCENDGICVSSMIHPSQPNQTSSNEQLICECTNGFTGTRCEIFGFNQFQLTAPRPDACSVKDACLNGAKCFPNGPKVFCSCAVGFIGEFCEISLTTTTPTTVEITVSTSGYSSAVYITVALFVIFSIIIGCFKYKFKPMRQQALARGQVPEPYKMPETKSMLIDPEASEAQKKVFTIEGSVQKIDEEVRYTSAPRKYESNNEYAVIQKSTPPPPSLSPPSIPACHYV</sequence>
<keyword id="KW-1003">Cell membrane</keyword>
<keyword id="KW-0217">Developmental protein</keyword>
<keyword id="KW-0221">Differentiation</keyword>
<keyword id="KW-1015">Disulfide bond</keyword>
<keyword id="KW-0245">EGF-like domain</keyword>
<keyword id="KW-0325">Glycoprotein</keyword>
<keyword id="KW-0472">Membrane</keyword>
<keyword id="KW-0914">Notch signaling pathway</keyword>
<keyword id="KW-1185">Reference proteome</keyword>
<keyword id="KW-0677">Repeat</keyword>
<keyword id="KW-0732">Signal</keyword>
<keyword id="KW-0812">Transmembrane</keyword>
<keyword id="KW-1133">Transmembrane helix</keyword>
<evidence type="ECO:0000250" key="1"/>
<evidence type="ECO:0000255" key="2"/>
<evidence type="ECO:0000255" key="3">
    <source>
        <dbReference type="PROSITE-ProRule" id="PRU00076"/>
    </source>
</evidence>
<evidence type="ECO:0000255" key="4">
    <source>
        <dbReference type="PROSITE-ProRule" id="PRU00377"/>
    </source>
</evidence>
<evidence type="ECO:0000269" key="5">
    <source>
    </source>
</evidence>
<evidence type="ECO:0000269" key="6">
    <source>
    </source>
</evidence>
<evidence type="ECO:0000269" key="7">
    <source>
    </source>
</evidence>
<evidence type="ECO:0000269" key="8">
    <source>
    </source>
</evidence>
<evidence type="ECO:0000269" key="9">
    <source>
    </source>
</evidence>
<evidence type="ECO:0000269" key="10">
    <source>
    </source>
</evidence>
<evidence type="ECO:0000269" key="11">
    <source>
    </source>
</evidence>
<evidence type="ECO:0000269" key="12">
    <source>
    </source>
</evidence>
<evidence type="ECO:0000269" key="13">
    <source>
    </source>
</evidence>
<evidence type="ECO:0000269" key="14">
    <source>
    </source>
</evidence>
<evidence type="ECO:0000269" key="15">
    <source>
    </source>
</evidence>
<evidence type="ECO:0000269" key="16">
    <source>
    </source>
</evidence>
<evidence type="ECO:0000269" key="17">
    <source>
    </source>
</evidence>
<evidence type="ECO:0000303" key="18">
    <source>
    </source>
</evidence>
<evidence type="ECO:0000303" key="19">
    <source>
    </source>
</evidence>
<evidence type="ECO:0000305" key="20">
    <source>
    </source>
</evidence>
<evidence type="ECO:0000305" key="21">
    <source>
    </source>
</evidence>
<evidence type="ECO:0000312" key="22">
    <source>
        <dbReference type="WormBase" id="Y73C8B.4"/>
    </source>
</evidence>
<feature type="signal peptide" evidence="2">
    <location>
        <begin position="1"/>
        <end position="15"/>
    </location>
</feature>
<feature type="chain" id="PRO_0000007632" description="Protein lag-2">
    <location>
        <begin position="16"/>
        <end position="402"/>
    </location>
</feature>
<feature type="topological domain" description="Extracellular" evidence="2">
    <location>
        <begin position="16"/>
        <end position="279"/>
    </location>
</feature>
<feature type="transmembrane region" description="Helical" evidence="2">
    <location>
        <begin position="280"/>
        <end position="306"/>
    </location>
</feature>
<feature type="topological domain" description="Cytoplasmic" evidence="2">
    <location>
        <begin position="307"/>
        <end position="402"/>
    </location>
</feature>
<feature type="domain" description="DSL" evidence="4">
    <location>
        <begin position="122"/>
        <end position="166"/>
    </location>
</feature>
<feature type="domain" description="EGF-like 1" evidence="3">
    <location>
        <begin position="171"/>
        <end position="216"/>
    </location>
</feature>
<feature type="domain" description="EGF-like 2" evidence="3">
    <location>
        <begin position="229"/>
        <end position="266"/>
    </location>
</feature>
<feature type="glycosylation site" description="N-linked (GlcNAc...) asparagine" evidence="2">
    <location>
        <position position="72"/>
    </location>
</feature>
<feature type="glycosylation site" description="N-linked (GlcNAc...) asparagine" evidence="2">
    <location>
        <position position="105"/>
    </location>
</feature>
<feature type="glycosylation site" description="N-linked (GlcNAc...) asparagine" evidence="2">
    <location>
        <position position="194"/>
    </location>
</feature>
<feature type="disulfide bond" evidence="1">
    <location>
        <begin position="124"/>
        <end position="133"/>
    </location>
</feature>
<feature type="disulfide bond" evidence="1">
    <location>
        <begin position="137"/>
        <end position="149"/>
    </location>
</feature>
<feature type="disulfide bond" evidence="1">
    <location>
        <begin position="157"/>
        <end position="166"/>
    </location>
</feature>
<feature type="disulfide bond" evidence="1">
    <location>
        <begin position="175"/>
        <end position="183"/>
    </location>
</feature>
<feature type="disulfide bond" evidence="1">
    <location>
        <begin position="177"/>
        <end position="204"/>
    </location>
</feature>
<feature type="disulfide bond" evidence="1">
    <location>
        <begin position="206"/>
        <end position="215"/>
    </location>
</feature>
<feature type="disulfide bond" evidence="1">
    <location>
        <begin position="233"/>
        <end position="245"/>
    </location>
</feature>
<feature type="disulfide bond" evidence="1">
    <location>
        <begin position="239"/>
        <end position="254"/>
    </location>
</feature>
<feature type="disulfide bond" evidence="1">
    <location>
        <begin position="256"/>
        <end position="265"/>
    </location>
</feature>
<feature type="mutagenesis site" description="In q411; causes death of first stage L1 larvae with various cell fate transformations." evidence="14">
    <location>
        <begin position="79"/>
        <end position="402"/>
    </location>
</feature>
<feature type="mutagenesis site" description="In sa37; suppresses lin-12 function." evidence="15">
    <original>G</original>
    <variation>D</variation>
    <location>
        <position position="262"/>
    </location>
</feature>
<feature type="mutagenesis site" description="Causes abnormal proximal proliferation in the germline and formation of ectopic vulvae." evidence="16">
    <location>
        <begin position="281"/>
        <end position="402"/>
    </location>
</feature>
<feature type="mutagenesis site" description="Causes abnormal proximal proliferation in the germline and formation of ectopic vulvae. Also, expression pattern of glp-1 is abnormal, being found in both distal and proximal regions of the germline. On a lag-2(q411) mutant background, causes death soon after hatching." evidence="17">
    <location>
        <begin position="287"/>
        <end position="402"/>
    </location>
</feature>
<feature type="mutagenesis site" description="Causes formation of ectopic vulvae. On a lag-2(q411) mutant background, suppresses abnormal phenotype." evidence="17">
    <location>
        <begin position="308"/>
        <end position="402"/>
    </location>
</feature>
<organism>
    <name type="scientific">Caenorhabditis elegans</name>
    <dbReference type="NCBI Taxonomy" id="6239"/>
    <lineage>
        <taxon>Eukaryota</taxon>
        <taxon>Metazoa</taxon>
        <taxon>Ecdysozoa</taxon>
        <taxon>Nematoda</taxon>
        <taxon>Chromadorea</taxon>
        <taxon>Rhabditida</taxon>
        <taxon>Rhabditina</taxon>
        <taxon>Rhabditomorpha</taxon>
        <taxon>Rhabditoidea</taxon>
        <taxon>Rhabditidae</taxon>
        <taxon>Peloderinae</taxon>
        <taxon>Caenorhabditis</taxon>
    </lineage>
</organism>
<dbReference type="EMBL" id="X77495">
    <property type="protein sequence ID" value="CAA54629.1"/>
    <property type="molecule type" value="Genomic_DNA"/>
</dbReference>
<dbReference type="EMBL" id="BX284605">
    <property type="protein sequence ID" value="CCD66873.1"/>
    <property type="molecule type" value="Genomic_DNA"/>
</dbReference>
<dbReference type="PIR" id="S42367">
    <property type="entry name" value="S42367"/>
</dbReference>
<dbReference type="RefSeq" id="NP_503877.1">
    <property type="nucleotide sequence ID" value="NM_071476.3"/>
</dbReference>
<dbReference type="BioGRID" id="43812">
    <property type="interactions" value="3"/>
</dbReference>
<dbReference type="DIP" id="DIP-46051N"/>
<dbReference type="FunCoup" id="P45442">
    <property type="interactions" value="8"/>
</dbReference>
<dbReference type="IntAct" id="P45442">
    <property type="interactions" value="1"/>
</dbReference>
<dbReference type="STRING" id="6239.Y73C8B.4.1"/>
<dbReference type="GlyCosmos" id="P45442">
    <property type="glycosylation" value="3 sites, No reported glycans"/>
</dbReference>
<dbReference type="PaxDb" id="6239-Y73C8B.4"/>
<dbReference type="EnsemblMetazoa" id="Y73C8B.4.1">
    <property type="protein sequence ID" value="Y73C8B.4.1"/>
    <property type="gene ID" value="WBGene00002246"/>
</dbReference>
<dbReference type="GeneID" id="178755"/>
<dbReference type="KEGG" id="cel:CELE_Y73C8B.4"/>
<dbReference type="UCSC" id="Y73C8B.4">
    <property type="organism name" value="c. elegans"/>
</dbReference>
<dbReference type="AGR" id="WB:WBGene00002246"/>
<dbReference type="CTD" id="178755"/>
<dbReference type="WormBase" id="Y73C8B.4">
    <property type="protein sequence ID" value="CE22970"/>
    <property type="gene ID" value="WBGene00002246"/>
    <property type="gene designation" value="lag-2"/>
</dbReference>
<dbReference type="eggNOG" id="KOG1218">
    <property type="taxonomic scope" value="Eukaryota"/>
</dbReference>
<dbReference type="GeneTree" id="ENSGT00970000195885"/>
<dbReference type="HOGENOM" id="CLU_693062_0_0_1"/>
<dbReference type="InParanoid" id="P45442"/>
<dbReference type="OMA" id="CFPNGPK"/>
<dbReference type="OrthoDB" id="5813299at2759"/>
<dbReference type="PhylomeDB" id="P45442"/>
<dbReference type="SignaLink" id="P45442"/>
<dbReference type="PRO" id="PR:P45442"/>
<dbReference type="Proteomes" id="UP000001940">
    <property type="component" value="Chromosome V"/>
</dbReference>
<dbReference type="Bgee" id="WBGene00002246">
    <property type="expression patterns" value="Expressed in embryo and 3 other cell types or tissues"/>
</dbReference>
<dbReference type="GO" id="GO:0031253">
    <property type="term" value="C:cell projection membrane"/>
    <property type="evidence" value="ECO:0000314"/>
    <property type="project" value="WormBase"/>
</dbReference>
<dbReference type="GO" id="GO:0032809">
    <property type="term" value="C:neuronal cell body membrane"/>
    <property type="evidence" value="ECO:0000314"/>
    <property type="project" value="WormBase"/>
</dbReference>
<dbReference type="GO" id="GO:0005886">
    <property type="term" value="C:plasma membrane"/>
    <property type="evidence" value="ECO:0000314"/>
    <property type="project" value="WormBase"/>
</dbReference>
<dbReference type="GO" id="GO:0005112">
    <property type="term" value="F:Notch binding"/>
    <property type="evidence" value="ECO:0000353"/>
    <property type="project" value="WormBase"/>
</dbReference>
<dbReference type="GO" id="GO:0001708">
    <property type="term" value="P:cell fate specification"/>
    <property type="evidence" value="ECO:0000315"/>
    <property type="project" value="WormBase"/>
</dbReference>
<dbReference type="GO" id="GO:0008406">
    <property type="term" value="P:gonad development"/>
    <property type="evidence" value="ECO:0000315"/>
    <property type="project" value="WormBase"/>
</dbReference>
<dbReference type="GO" id="GO:0043055">
    <property type="term" value="P:maintenance of dauer"/>
    <property type="evidence" value="ECO:0000316"/>
    <property type="project" value="WormBase"/>
</dbReference>
<dbReference type="GO" id="GO:0002119">
    <property type="term" value="P:nematode larval development"/>
    <property type="evidence" value="ECO:0000315"/>
    <property type="project" value="WormBase"/>
</dbReference>
<dbReference type="GO" id="GO:0007219">
    <property type="term" value="P:Notch signaling pathway"/>
    <property type="evidence" value="ECO:0007669"/>
    <property type="project" value="UniProtKB-KW"/>
</dbReference>
<dbReference type="GO" id="GO:2000648">
    <property type="term" value="P:positive regulation of stem cell proliferation"/>
    <property type="evidence" value="ECO:0000315"/>
    <property type="project" value="WormBase"/>
</dbReference>
<dbReference type="GO" id="GO:0110011">
    <property type="term" value="P:regulation of basement membrane organization"/>
    <property type="evidence" value="ECO:0000315"/>
    <property type="project" value="UniProtKB"/>
</dbReference>
<dbReference type="GO" id="GO:1905936">
    <property type="term" value="P:regulation of germ cell proliferation"/>
    <property type="evidence" value="ECO:0000315"/>
    <property type="project" value="UniProtKB"/>
</dbReference>
<dbReference type="GO" id="GO:0042661">
    <property type="term" value="P:regulation of mesodermal cell fate specification"/>
    <property type="evidence" value="ECO:0000315"/>
    <property type="project" value="UniProtKB"/>
</dbReference>
<dbReference type="GO" id="GO:0040028">
    <property type="term" value="P:regulation of vulval development"/>
    <property type="evidence" value="ECO:0000315"/>
    <property type="project" value="WormBase"/>
</dbReference>
<dbReference type="GO" id="GO:0030431">
    <property type="term" value="P:sleep"/>
    <property type="evidence" value="ECO:0000315"/>
    <property type="project" value="UniProtKB"/>
</dbReference>
<dbReference type="FunFam" id="2.10.25.140:FF:000003">
    <property type="entry name" value="Delta-like protein"/>
    <property type="match status" value="1"/>
</dbReference>
<dbReference type="FunFam" id="2.10.25.10:FF:001163">
    <property type="entry name" value="Protein glp-1"/>
    <property type="match status" value="1"/>
</dbReference>
<dbReference type="Gene3D" id="2.10.25.140">
    <property type="match status" value="1"/>
</dbReference>
<dbReference type="Gene3D" id="2.10.25.10">
    <property type="entry name" value="Laminin"/>
    <property type="match status" value="2"/>
</dbReference>
<dbReference type="InterPro" id="IPR001774">
    <property type="entry name" value="DSL"/>
</dbReference>
<dbReference type="InterPro" id="IPR000742">
    <property type="entry name" value="EGF-like_dom"/>
</dbReference>
<dbReference type="InterPro" id="IPR039178">
    <property type="entry name" value="Lag2"/>
</dbReference>
<dbReference type="PANTHER" id="PTHR22669">
    <property type="entry name" value="DELTA/SERRATE/LAG-2 DOMAIN PROTEIN"/>
    <property type="match status" value="1"/>
</dbReference>
<dbReference type="PANTHER" id="PTHR22669:SF8">
    <property type="entry name" value="PROTEIN LAG-2"/>
    <property type="match status" value="1"/>
</dbReference>
<dbReference type="Pfam" id="PF01414">
    <property type="entry name" value="DSL"/>
    <property type="match status" value="1"/>
</dbReference>
<dbReference type="Pfam" id="PF00008">
    <property type="entry name" value="EGF"/>
    <property type="match status" value="1"/>
</dbReference>
<dbReference type="SMART" id="SM00051">
    <property type="entry name" value="DSL"/>
    <property type="match status" value="1"/>
</dbReference>
<dbReference type="SMART" id="SM00181">
    <property type="entry name" value="EGF"/>
    <property type="match status" value="2"/>
</dbReference>
<dbReference type="SUPFAM" id="SSF57196">
    <property type="entry name" value="EGF/Laminin"/>
    <property type="match status" value="1"/>
</dbReference>
<dbReference type="PROSITE" id="PS51051">
    <property type="entry name" value="DSL"/>
    <property type="match status" value="1"/>
</dbReference>
<dbReference type="PROSITE" id="PS00022">
    <property type="entry name" value="EGF_1"/>
    <property type="match status" value="2"/>
</dbReference>
<dbReference type="PROSITE" id="PS01186">
    <property type="entry name" value="EGF_2"/>
    <property type="match status" value="2"/>
</dbReference>
<dbReference type="PROSITE" id="PS50026">
    <property type="entry name" value="EGF_3"/>
    <property type="match status" value="2"/>
</dbReference>